<feature type="chain" id="PRO_1000068582" description="Small, acid-soluble spore protein K">
    <location>
        <begin position="1"/>
        <end position="49"/>
    </location>
</feature>
<feature type="region of interest" description="Disordered" evidence="2">
    <location>
        <begin position="1"/>
        <end position="49"/>
    </location>
</feature>
<feature type="compositionally biased region" description="Basic and acidic residues" evidence="2">
    <location>
        <begin position="39"/>
        <end position="49"/>
    </location>
</feature>
<name>SSPK_BACP2</name>
<gene>
    <name evidence="1" type="primary">sspK</name>
    <name type="ordered locus">BPUM_0798</name>
</gene>
<reference key="1">
    <citation type="journal article" date="2007" name="PLoS ONE">
        <title>Paradoxical DNA repair and peroxide resistance gene conservation in Bacillus pumilus SAFR-032.</title>
        <authorList>
            <person name="Gioia J."/>
            <person name="Yerrapragada S."/>
            <person name="Qin X."/>
            <person name="Jiang H."/>
            <person name="Igboeli O.C."/>
            <person name="Muzny D."/>
            <person name="Dugan-Rocha S."/>
            <person name="Ding Y."/>
            <person name="Hawes A."/>
            <person name="Liu W."/>
            <person name="Perez L."/>
            <person name="Kovar C."/>
            <person name="Dinh H."/>
            <person name="Lee S."/>
            <person name="Nazareth L."/>
            <person name="Blyth P."/>
            <person name="Holder M."/>
            <person name="Buhay C."/>
            <person name="Tirumalai M.R."/>
            <person name="Liu Y."/>
            <person name="Dasgupta I."/>
            <person name="Bokhetache L."/>
            <person name="Fujita M."/>
            <person name="Karouia F."/>
            <person name="Eswara Moorthy P."/>
            <person name="Siefert J."/>
            <person name="Uzman A."/>
            <person name="Buzumbo P."/>
            <person name="Verma A."/>
            <person name="Zwiya H."/>
            <person name="McWilliams B.D."/>
            <person name="Olowu A."/>
            <person name="Clinkenbeard K.D."/>
            <person name="Newcombe D."/>
            <person name="Golebiewski L."/>
            <person name="Petrosino J.F."/>
            <person name="Nicholson W.L."/>
            <person name="Fox G.E."/>
            <person name="Venkateswaran K."/>
            <person name="Highlander S.K."/>
            <person name="Weinstock G.M."/>
        </authorList>
    </citation>
    <scope>NUCLEOTIDE SEQUENCE [LARGE SCALE GENOMIC DNA]</scope>
    <source>
        <strain>SAFR-032</strain>
    </source>
</reference>
<dbReference type="EMBL" id="CP000813">
    <property type="protein sequence ID" value="ABV61482.1"/>
    <property type="molecule type" value="Genomic_DNA"/>
</dbReference>
<dbReference type="RefSeq" id="WP_003217849.1">
    <property type="nucleotide sequence ID" value="NZ_VEIS01000018.1"/>
</dbReference>
<dbReference type="STRING" id="315750.BPUM_0798"/>
<dbReference type="KEGG" id="bpu:BPUM_0798"/>
<dbReference type="HOGENOM" id="CLU_204383_0_0_9"/>
<dbReference type="OrthoDB" id="2382188at2"/>
<dbReference type="Proteomes" id="UP000001355">
    <property type="component" value="Chromosome"/>
</dbReference>
<dbReference type="GO" id="GO:0042601">
    <property type="term" value="C:endospore-forming forespore"/>
    <property type="evidence" value="ECO:0007669"/>
    <property type="project" value="InterPro"/>
</dbReference>
<dbReference type="GO" id="GO:0030436">
    <property type="term" value="P:asexual sporulation"/>
    <property type="evidence" value="ECO:0007669"/>
    <property type="project" value="UniProtKB-UniRule"/>
</dbReference>
<dbReference type="GO" id="GO:0030435">
    <property type="term" value="P:sporulation resulting in formation of a cellular spore"/>
    <property type="evidence" value="ECO:0007669"/>
    <property type="project" value="UniProtKB-KW"/>
</dbReference>
<dbReference type="HAMAP" id="MF_01504">
    <property type="entry name" value="SspK"/>
    <property type="match status" value="1"/>
</dbReference>
<dbReference type="InterPro" id="IPR012611">
    <property type="entry name" value="SASP_SspK"/>
</dbReference>
<dbReference type="NCBIfam" id="NF002843">
    <property type="entry name" value="PRK03081.1"/>
    <property type="match status" value="1"/>
</dbReference>
<dbReference type="NCBIfam" id="TIGR03091">
    <property type="entry name" value="SASP_sspK"/>
    <property type="match status" value="1"/>
</dbReference>
<dbReference type="Pfam" id="PF08176">
    <property type="entry name" value="SspK"/>
    <property type="match status" value="1"/>
</dbReference>
<organism>
    <name type="scientific">Bacillus pumilus (strain SAFR-032)</name>
    <dbReference type="NCBI Taxonomy" id="315750"/>
    <lineage>
        <taxon>Bacteria</taxon>
        <taxon>Bacillati</taxon>
        <taxon>Bacillota</taxon>
        <taxon>Bacilli</taxon>
        <taxon>Bacillales</taxon>
        <taxon>Bacillaceae</taxon>
        <taxon>Bacillus</taxon>
    </lineage>
</organism>
<sequence>MRNKAKGFPNQVNHKFEGEPGATDAYASKRPNGETNTRPQERMRASGKR</sequence>
<proteinExistence type="inferred from homology"/>
<evidence type="ECO:0000255" key="1">
    <source>
        <dbReference type="HAMAP-Rule" id="MF_01504"/>
    </source>
</evidence>
<evidence type="ECO:0000256" key="2">
    <source>
        <dbReference type="SAM" id="MobiDB-lite"/>
    </source>
</evidence>
<accession>A8FB65</accession>
<keyword id="KW-0749">Sporulation</keyword>
<comment type="subcellular location">
    <subcellularLocation>
        <location evidence="1">Spore core</location>
    </subcellularLocation>
</comment>
<comment type="induction">
    <text evidence="1">Expressed only in the forespore compartment of sporulating cells.</text>
</comment>
<comment type="similarity">
    <text evidence="1">Belongs to the SspK family.</text>
</comment>
<protein>
    <recommendedName>
        <fullName evidence="1">Small, acid-soluble spore protein K</fullName>
        <shortName evidence="1">SASP K</shortName>
    </recommendedName>
</protein>